<gene>
    <name evidence="5" type="primary">natR</name>
    <name evidence="7" type="synonym">yccH</name>
    <name evidence="8" type="ordered locus">BSU02740</name>
</gene>
<feature type="chain" id="PRO_0000081392" description="Transcriptional regulatory protein NatR">
    <location>
        <begin position="1"/>
        <end position="233"/>
    </location>
</feature>
<feature type="domain" description="Response regulatory" evidence="2">
    <location>
        <begin position="3"/>
        <end position="117"/>
    </location>
</feature>
<feature type="domain" description="HTH LytTR-type" evidence="1">
    <location>
        <begin position="129"/>
        <end position="233"/>
    </location>
</feature>
<feature type="modified residue" description="4-aspartylphosphate" evidence="2">
    <location>
        <position position="54"/>
    </location>
</feature>
<sequence length="233" mass="26969">MVKVGLVDDYRVDLEKLEAIVSRMQDVEIVFSTDSAKEAYRRVKNGDIDLLLADIEMPHMSGYELADLIKSHSLDVDVIFVTGHGGYAVHAFDLNVHDYIMKPYYADRLAASFDRYLKKKTETSLNGRILIKQKSEMHVLQKKDIIFAERTGRSTTIVTTAEEVQTYQTLNDIKGDLPEKDFLRSHRSFIINIHYIKHFSAYTKHSFTVSFEGTSKKAMITKQQLDYFQNYYF</sequence>
<accession>P70955</accession>
<protein>
    <recommendedName>
        <fullName evidence="6">Transcriptional regulatory protein NatR</fullName>
    </recommendedName>
</protein>
<keyword id="KW-0963">Cytoplasm</keyword>
<keyword id="KW-0238">DNA-binding</keyword>
<keyword id="KW-0597">Phosphoprotein</keyword>
<keyword id="KW-1185">Reference proteome</keyword>
<keyword id="KW-0804">Transcription</keyword>
<keyword id="KW-0805">Transcription regulation</keyword>
<keyword id="KW-0902">Two-component regulatory system</keyword>
<comment type="function">
    <text evidence="3 4">Member of the two-component regulatory system NatK/NatR that positively regulates the expression of the natAB operon. Acts by binding directly to the promoter of natAB.</text>
</comment>
<comment type="subcellular location">
    <subcellularLocation>
        <location evidence="6">Cytoplasm</location>
    </subcellularLocation>
</comment>
<comment type="PTM">
    <text evidence="6">Phosphorylated by NatK.</text>
</comment>
<dbReference type="EMBL" id="U30873">
    <property type="protein sequence ID" value="AAB53021.1"/>
    <property type="molecule type" value="Genomic_DNA"/>
</dbReference>
<dbReference type="EMBL" id="AB000617">
    <property type="protein sequence ID" value="BAA22235.1"/>
    <property type="molecule type" value="Genomic_DNA"/>
</dbReference>
<dbReference type="EMBL" id="AL009126">
    <property type="protein sequence ID" value="CAB12068.1"/>
    <property type="molecule type" value="Genomic_DNA"/>
</dbReference>
<dbReference type="PIR" id="A69755">
    <property type="entry name" value="A69755"/>
</dbReference>
<dbReference type="RefSeq" id="NP_388156.1">
    <property type="nucleotide sequence ID" value="NC_000964.3"/>
</dbReference>
<dbReference type="RefSeq" id="WP_003234759.1">
    <property type="nucleotide sequence ID" value="NZ_OZ025638.1"/>
</dbReference>
<dbReference type="SMR" id="P70955"/>
<dbReference type="FunCoup" id="P70955">
    <property type="interactions" value="199"/>
</dbReference>
<dbReference type="STRING" id="224308.BSU02740"/>
<dbReference type="PaxDb" id="224308-BSU02740"/>
<dbReference type="EnsemblBacteria" id="CAB12068">
    <property type="protein sequence ID" value="CAB12068"/>
    <property type="gene ID" value="BSU_02740"/>
</dbReference>
<dbReference type="GeneID" id="938379"/>
<dbReference type="KEGG" id="bsu:BSU02740"/>
<dbReference type="PATRIC" id="fig|224308.179.peg.284"/>
<dbReference type="eggNOG" id="COG3279">
    <property type="taxonomic scope" value="Bacteria"/>
</dbReference>
<dbReference type="InParanoid" id="P70955"/>
<dbReference type="OrthoDB" id="3190595at2"/>
<dbReference type="PhylomeDB" id="P70955"/>
<dbReference type="BioCyc" id="BSUB:BSU02740-MONOMER"/>
<dbReference type="Proteomes" id="UP000001570">
    <property type="component" value="Chromosome"/>
</dbReference>
<dbReference type="GO" id="GO:0005829">
    <property type="term" value="C:cytosol"/>
    <property type="evidence" value="ECO:0000318"/>
    <property type="project" value="GO_Central"/>
</dbReference>
<dbReference type="GO" id="GO:0032993">
    <property type="term" value="C:protein-DNA complex"/>
    <property type="evidence" value="ECO:0000318"/>
    <property type="project" value="GO_Central"/>
</dbReference>
<dbReference type="GO" id="GO:0000156">
    <property type="term" value="F:phosphorelay response regulator activity"/>
    <property type="evidence" value="ECO:0000318"/>
    <property type="project" value="GO_Central"/>
</dbReference>
<dbReference type="GO" id="GO:0000976">
    <property type="term" value="F:transcription cis-regulatory region binding"/>
    <property type="evidence" value="ECO:0000318"/>
    <property type="project" value="GO_Central"/>
</dbReference>
<dbReference type="GO" id="GO:0006355">
    <property type="term" value="P:regulation of DNA-templated transcription"/>
    <property type="evidence" value="ECO:0000318"/>
    <property type="project" value="GO_Central"/>
</dbReference>
<dbReference type="CDD" id="cd00156">
    <property type="entry name" value="REC"/>
    <property type="match status" value="1"/>
</dbReference>
<dbReference type="Gene3D" id="3.40.50.2300">
    <property type="match status" value="1"/>
</dbReference>
<dbReference type="Gene3D" id="2.40.50.1020">
    <property type="entry name" value="LytTr DNA-binding domain"/>
    <property type="match status" value="1"/>
</dbReference>
<dbReference type="InterPro" id="IPR011006">
    <property type="entry name" value="CheY-like_superfamily"/>
</dbReference>
<dbReference type="InterPro" id="IPR046947">
    <property type="entry name" value="LytR-like"/>
</dbReference>
<dbReference type="InterPro" id="IPR007492">
    <property type="entry name" value="LytTR_DNA-bd_dom"/>
</dbReference>
<dbReference type="InterPro" id="IPR001789">
    <property type="entry name" value="Sig_transdc_resp-reg_receiver"/>
</dbReference>
<dbReference type="PANTHER" id="PTHR37299:SF1">
    <property type="entry name" value="STAGE 0 SPORULATION PROTEIN A HOMOLOG"/>
    <property type="match status" value="1"/>
</dbReference>
<dbReference type="PANTHER" id="PTHR37299">
    <property type="entry name" value="TRANSCRIPTIONAL REGULATOR-RELATED"/>
    <property type="match status" value="1"/>
</dbReference>
<dbReference type="Pfam" id="PF04397">
    <property type="entry name" value="LytTR"/>
    <property type="match status" value="1"/>
</dbReference>
<dbReference type="Pfam" id="PF00072">
    <property type="entry name" value="Response_reg"/>
    <property type="match status" value="1"/>
</dbReference>
<dbReference type="SMART" id="SM00850">
    <property type="entry name" value="LytTR"/>
    <property type="match status" value="1"/>
</dbReference>
<dbReference type="SMART" id="SM00448">
    <property type="entry name" value="REC"/>
    <property type="match status" value="1"/>
</dbReference>
<dbReference type="SUPFAM" id="SSF52172">
    <property type="entry name" value="CheY-like"/>
    <property type="match status" value="1"/>
</dbReference>
<dbReference type="PROSITE" id="PS50930">
    <property type="entry name" value="HTH_LYTTR"/>
    <property type="match status" value="1"/>
</dbReference>
<dbReference type="PROSITE" id="PS50110">
    <property type="entry name" value="RESPONSE_REGULATORY"/>
    <property type="match status" value="1"/>
</dbReference>
<organism>
    <name type="scientific">Bacillus subtilis (strain 168)</name>
    <dbReference type="NCBI Taxonomy" id="224308"/>
    <lineage>
        <taxon>Bacteria</taxon>
        <taxon>Bacillati</taxon>
        <taxon>Bacillota</taxon>
        <taxon>Bacilli</taxon>
        <taxon>Bacillales</taxon>
        <taxon>Bacillaceae</taxon>
        <taxon>Bacillus</taxon>
    </lineage>
</organism>
<evidence type="ECO:0000255" key="1">
    <source>
        <dbReference type="PROSITE-ProRule" id="PRU00112"/>
    </source>
</evidence>
<evidence type="ECO:0000255" key="2">
    <source>
        <dbReference type="PROSITE-ProRule" id="PRU00169"/>
    </source>
</evidence>
<evidence type="ECO:0000269" key="3">
    <source>
    </source>
</evidence>
<evidence type="ECO:0000269" key="4">
    <source>
    </source>
</evidence>
<evidence type="ECO:0000303" key="5">
    <source>
    </source>
</evidence>
<evidence type="ECO:0000305" key="6"/>
<evidence type="ECO:0000312" key="7">
    <source>
        <dbReference type="EMBL" id="BAA22235.1"/>
    </source>
</evidence>
<evidence type="ECO:0000312" key="8">
    <source>
        <dbReference type="EMBL" id="CAB12068.1"/>
    </source>
</evidence>
<proteinExistence type="evidence at protein level"/>
<name>NATR_BACSU</name>
<reference key="1">
    <citation type="journal article" date="1997" name="Mol. Microbiol.">
        <title>A two-gene ABC-type transport system that extrudes Na+ in Bacillus subtilis is induced by ethanol or protonophore.</title>
        <authorList>
            <person name="Cheng J."/>
            <person name="Guffanti A.A."/>
            <person name="Krulwich T.A."/>
        </authorList>
    </citation>
    <scope>NUCLEOTIDE SEQUENCE [GENOMIC DNA]</scope>
    <source>
        <strain>BD99</strain>
    </source>
</reference>
<reference key="2">
    <citation type="journal article" date="1997" name="Microbiology">
        <title>A 32 kb nucleotide sequence from the region of the lincomycin-resistance gene (22 degrees-25 degrees) of the Bacillus subtilis chromosome and identification of the site of the lin-2 mutation.</title>
        <authorList>
            <person name="Kumano M."/>
            <person name="Tamakoshi A."/>
            <person name="Yamane K."/>
        </authorList>
    </citation>
    <scope>NUCLEOTIDE SEQUENCE [GENOMIC DNA]</scope>
    <source>
        <strain>168</strain>
    </source>
</reference>
<reference key="3">
    <citation type="journal article" date="1997" name="Nature">
        <title>The complete genome sequence of the Gram-positive bacterium Bacillus subtilis.</title>
        <authorList>
            <person name="Kunst F."/>
            <person name="Ogasawara N."/>
            <person name="Moszer I."/>
            <person name="Albertini A.M."/>
            <person name="Alloni G."/>
            <person name="Azevedo V."/>
            <person name="Bertero M.G."/>
            <person name="Bessieres P."/>
            <person name="Bolotin A."/>
            <person name="Borchert S."/>
            <person name="Borriss R."/>
            <person name="Boursier L."/>
            <person name="Brans A."/>
            <person name="Braun M."/>
            <person name="Brignell S.C."/>
            <person name="Bron S."/>
            <person name="Brouillet S."/>
            <person name="Bruschi C.V."/>
            <person name="Caldwell B."/>
            <person name="Capuano V."/>
            <person name="Carter N.M."/>
            <person name="Choi S.-K."/>
            <person name="Codani J.-J."/>
            <person name="Connerton I.F."/>
            <person name="Cummings N.J."/>
            <person name="Daniel R.A."/>
            <person name="Denizot F."/>
            <person name="Devine K.M."/>
            <person name="Duesterhoeft A."/>
            <person name="Ehrlich S.D."/>
            <person name="Emmerson P.T."/>
            <person name="Entian K.-D."/>
            <person name="Errington J."/>
            <person name="Fabret C."/>
            <person name="Ferrari E."/>
            <person name="Foulger D."/>
            <person name="Fritz C."/>
            <person name="Fujita M."/>
            <person name="Fujita Y."/>
            <person name="Fuma S."/>
            <person name="Galizzi A."/>
            <person name="Galleron N."/>
            <person name="Ghim S.-Y."/>
            <person name="Glaser P."/>
            <person name="Goffeau A."/>
            <person name="Golightly E.J."/>
            <person name="Grandi G."/>
            <person name="Guiseppi G."/>
            <person name="Guy B.J."/>
            <person name="Haga K."/>
            <person name="Haiech J."/>
            <person name="Harwood C.R."/>
            <person name="Henaut A."/>
            <person name="Hilbert H."/>
            <person name="Holsappel S."/>
            <person name="Hosono S."/>
            <person name="Hullo M.-F."/>
            <person name="Itaya M."/>
            <person name="Jones L.-M."/>
            <person name="Joris B."/>
            <person name="Karamata D."/>
            <person name="Kasahara Y."/>
            <person name="Klaerr-Blanchard M."/>
            <person name="Klein C."/>
            <person name="Kobayashi Y."/>
            <person name="Koetter P."/>
            <person name="Koningstein G."/>
            <person name="Krogh S."/>
            <person name="Kumano M."/>
            <person name="Kurita K."/>
            <person name="Lapidus A."/>
            <person name="Lardinois S."/>
            <person name="Lauber J."/>
            <person name="Lazarevic V."/>
            <person name="Lee S.-M."/>
            <person name="Levine A."/>
            <person name="Liu H."/>
            <person name="Masuda S."/>
            <person name="Mauel C."/>
            <person name="Medigue C."/>
            <person name="Medina N."/>
            <person name="Mellado R.P."/>
            <person name="Mizuno M."/>
            <person name="Moestl D."/>
            <person name="Nakai S."/>
            <person name="Noback M."/>
            <person name="Noone D."/>
            <person name="O'Reilly M."/>
            <person name="Ogawa K."/>
            <person name="Ogiwara A."/>
            <person name="Oudega B."/>
            <person name="Park S.-H."/>
            <person name="Parro V."/>
            <person name="Pohl T.M."/>
            <person name="Portetelle D."/>
            <person name="Porwollik S."/>
            <person name="Prescott A.M."/>
            <person name="Presecan E."/>
            <person name="Pujic P."/>
            <person name="Purnelle B."/>
            <person name="Rapoport G."/>
            <person name="Rey M."/>
            <person name="Reynolds S."/>
            <person name="Rieger M."/>
            <person name="Rivolta C."/>
            <person name="Rocha E."/>
            <person name="Roche B."/>
            <person name="Rose M."/>
            <person name="Sadaie Y."/>
            <person name="Sato T."/>
            <person name="Scanlan E."/>
            <person name="Schleich S."/>
            <person name="Schroeter R."/>
            <person name="Scoffone F."/>
            <person name="Sekiguchi J."/>
            <person name="Sekowska A."/>
            <person name="Seror S.J."/>
            <person name="Serror P."/>
            <person name="Shin B.-S."/>
            <person name="Soldo B."/>
            <person name="Sorokin A."/>
            <person name="Tacconi E."/>
            <person name="Takagi T."/>
            <person name="Takahashi H."/>
            <person name="Takemaru K."/>
            <person name="Takeuchi M."/>
            <person name="Tamakoshi A."/>
            <person name="Tanaka T."/>
            <person name="Terpstra P."/>
            <person name="Tognoni A."/>
            <person name="Tosato V."/>
            <person name="Uchiyama S."/>
            <person name="Vandenbol M."/>
            <person name="Vannier F."/>
            <person name="Vassarotti A."/>
            <person name="Viari A."/>
            <person name="Wambutt R."/>
            <person name="Wedler E."/>
            <person name="Wedler H."/>
            <person name="Weitzenegger T."/>
            <person name="Winters P."/>
            <person name="Wipat A."/>
            <person name="Yamamoto H."/>
            <person name="Yamane K."/>
            <person name="Yasumoto K."/>
            <person name="Yata K."/>
            <person name="Yoshida K."/>
            <person name="Yoshikawa H.-F."/>
            <person name="Zumstein E."/>
            <person name="Yoshikawa H."/>
            <person name="Danchin A."/>
        </authorList>
    </citation>
    <scope>NUCLEOTIDE SEQUENCE [LARGE SCALE GENOMIC DNA]</scope>
    <source>
        <strain>168</strain>
    </source>
</reference>
<reference key="4">
    <citation type="journal article" date="2001" name="J. Bacteriol.">
        <title>Comprehensive DNA microarray analysis of Bacillus subtilis two-component regulatory systems.</title>
        <authorList>
            <person name="Kobayashi K."/>
            <person name="Ogura M."/>
            <person name="Yamaguchi H."/>
            <person name="Yoshida K."/>
            <person name="Ogasawara N."/>
            <person name="Tanaka T."/>
            <person name="Fujita Y."/>
        </authorList>
    </citation>
    <scope>FUNCTION</scope>
</reference>
<reference key="5">
    <citation type="journal article" date="2007" name="Microbiology">
        <title>The Bacillus subtilis NatK-NatR two-component system regulates expression of the natAB operon encoding an ABC transporter for sodium ion extrusion.</title>
        <authorList>
            <person name="Ogura M."/>
            <person name="Tsukahara K."/>
            <person name="Hayashi K."/>
            <person name="Tanaka T."/>
        </authorList>
    </citation>
    <scope>FUNCTION</scope>
    <scope>DNA-BINDING</scope>
    <source>
        <strain>168</strain>
    </source>
</reference>